<reference key="1">
    <citation type="submission" date="2007-03" db="EMBL/GenBank/DDBJ databases">
        <title>Complete sequence of chromosome of Methanococcus maripaludis C5.</title>
        <authorList>
            <consortium name="US DOE Joint Genome Institute"/>
            <person name="Copeland A."/>
            <person name="Lucas S."/>
            <person name="Lapidus A."/>
            <person name="Barry K."/>
            <person name="Glavina del Rio T."/>
            <person name="Dalin E."/>
            <person name="Tice H."/>
            <person name="Pitluck S."/>
            <person name="Chertkov O."/>
            <person name="Brettin T."/>
            <person name="Bruce D."/>
            <person name="Han C."/>
            <person name="Detter J.C."/>
            <person name="Schmutz J."/>
            <person name="Larimer F."/>
            <person name="Land M."/>
            <person name="Hauser L."/>
            <person name="Kyrpides N."/>
            <person name="Mikhailova N."/>
            <person name="Sieprawska-Lupa M."/>
            <person name="Whitman W.B."/>
            <person name="Richardson P."/>
        </authorList>
    </citation>
    <scope>NUCLEOTIDE SEQUENCE [LARGE SCALE GENOMIC DNA]</scope>
    <source>
        <strain>C5 / ATCC BAA-1333</strain>
    </source>
</reference>
<comment type="similarity">
    <text evidence="1">Belongs to the UPF0251 family.</text>
</comment>
<name>Y986_METM5</name>
<sequence>MKFRKGRPKIPRLISEEPQFKLFKPAGTPGIELESEVLSFEELESLRLVDYLNQPHEEAADAMGISRRVFWNILKSARKKVADALINGKMIDIGGGYYKIRECNYEDECQRGRNCRYGVSNCLTLKKDSE</sequence>
<protein>
    <recommendedName>
        <fullName evidence="1">UPF0251 protein MmarC5_0986</fullName>
    </recommendedName>
</protein>
<dbReference type="EMBL" id="CP000609">
    <property type="protein sequence ID" value="ABO35292.1"/>
    <property type="molecule type" value="Genomic_DNA"/>
</dbReference>
<dbReference type="RefSeq" id="WP_011868745.1">
    <property type="nucleotide sequence ID" value="NC_009135.1"/>
</dbReference>
<dbReference type="STRING" id="402880.MmarC5_0986"/>
<dbReference type="GeneID" id="4928722"/>
<dbReference type="KEGG" id="mmq:MmarC5_0986"/>
<dbReference type="eggNOG" id="arCOG02238">
    <property type="taxonomic scope" value="Archaea"/>
</dbReference>
<dbReference type="HOGENOM" id="CLU_094511_1_0_2"/>
<dbReference type="OrthoDB" id="74471at2157"/>
<dbReference type="Proteomes" id="UP000000253">
    <property type="component" value="Chromosome"/>
</dbReference>
<dbReference type="HAMAP" id="MF_00674">
    <property type="entry name" value="UPF0251"/>
    <property type="match status" value="1"/>
</dbReference>
<dbReference type="InterPro" id="IPR002852">
    <property type="entry name" value="UPF0251"/>
</dbReference>
<dbReference type="PANTHER" id="PTHR37478">
    <property type="match status" value="1"/>
</dbReference>
<dbReference type="PANTHER" id="PTHR37478:SF2">
    <property type="entry name" value="UPF0251 PROTEIN TK0562"/>
    <property type="match status" value="1"/>
</dbReference>
<dbReference type="Pfam" id="PF02001">
    <property type="entry name" value="DUF134"/>
    <property type="match status" value="1"/>
</dbReference>
<organism>
    <name type="scientific">Methanococcus maripaludis (strain C5 / ATCC BAA-1333)</name>
    <dbReference type="NCBI Taxonomy" id="402880"/>
    <lineage>
        <taxon>Archaea</taxon>
        <taxon>Methanobacteriati</taxon>
        <taxon>Methanobacteriota</taxon>
        <taxon>Methanomada group</taxon>
        <taxon>Methanococci</taxon>
        <taxon>Methanococcales</taxon>
        <taxon>Methanococcaceae</taxon>
        <taxon>Methanococcus</taxon>
    </lineage>
</organism>
<gene>
    <name type="ordered locus">MmarC5_0986</name>
</gene>
<accession>A4FYK8</accession>
<proteinExistence type="inferred from homology"/>
<evidence type="ECO:0000255" key="1">
    <source>
        <dbReference type="HAMAP-Rule" id="MF_00674"/>
    </source>
</evidence>
<feature type="chain" id="PRO_1000044749" description="UPF0251 protein MmarC5_0986">
    <location>
        <begin position="1"/>
        <end position="130"/>
    </location>
</feature>